<feature type="chain" id="PRO_0000188114" description="ATP synthase epsilon chain">
    <location>
        <begin position="1"/>
        <end position="141"/>
    </location>
</feature>
<evidence type="ECO:0000255" key="1">
    <source>
        <dbReference type="HAMAP-Rule" id="MF_00530"/>
    </source>
</evidence>
<accession>Q62FR4</accession>
<dbReference type="EMBL" id="CP000010">
    <property type="protein sequence ID" value="AAU48033.1"/>
    <property type="molecule type" value="Genomic_DNA"/>
</dbReference>
<dbReference type="RefSeq" id="WP_004195832.1">
    <property type="nucleotide sequence ID" value="NC_006348.1"/>
</dbReference>
<dbReference type="RefSeq" id="YP_104463.1">
    <property type="nucleotide sequence ID" value="NC_006348.1"/>
</dbReference>
<dbReference type="SMR" id="Q62FR4"/>
<dbReference type="KEGG" id="bma:BMA2958"/>
<dbReference type="PATRIC" id="fig|243160.12.peg.3027"/>
<dbReference type="eggNOG" id="COG0355">
    <property type="taxonomic scope" value="Bacteria"/>
</dbReference>
<dbReference type="HOGENOM" id="CLU_084338_2_0_4"/>
<dbReference type="Proteomes" id="UP000006693">
    <property type="component" value="Chromosome 1"/>
</dbReference>
<dbReference type="GO" id="GO:0005886">
    <property type="term" value="C:plasma membrane"/>
    <property type="evidence" value="ECO:0007669"/>
    <property type="project" value="UniProtKB-SubCell"/>
</dbReference>
<dbReference type="GO" id="GO:0045259">
    <property type="term" value="C:proton-transporting ATP synthase complex"/>
    <property type="evidence" value="ECO:0007669"/>
    <property type="project" value="UniProtKB-KW"/>
</dbReference>
<dbReference type="GO" id="GO:0005524">
    <property type="term" value="F:ATP binding"/>
    <property type="evidence" value="ECO:0007669"/>
    <property type="project" value="UniProtKB-UniRule"/>
</dbReference>
<dbReference type="GO" id="GO:0046933">
    <property type="term" value="F:proton-transporting ATP synthase activity, rotational mechanism"/>
    <property type="evidence" value="ECO:0007669"/>
    <property type="project" value="UniProtKB-UniRule"/>
</dbReference>
<dbReference type="CDD" id="cd12152">
    <property type="entry name" value="F1-ATPase_delta"/>
    <property type="match status" value="1"/>
</dbReference>
<dbReference type="FunFam" id="2.60.15.10:FF:000001">
    <property type="entry name" value="ATP synthase epsilon chain"/>
    <property type="match status" value="1"/>
</dbReference>
<dbReference type="Gene3D" id="1.20.5.440">
    <property type="entry name" value="ATP synthase delta/epsilon subunit, C-terminal domain"/>
    <property type="match status" value="1"/>
</dbReference>
<dbReference type="Gene3D" id="2.60.15.10">
    <property type="entry name" value="F0F1 ATP synthase delta/epsilon subunit, N-terminal"/>
    <property type="match status" value="1"/>
</dbReference>
<dbReference type="HAMAP" id="MF_00530">
    <property type="entry name" value="ATP_synth_epsil_bac"/>
    <property type="match status" value="1"/>
</dbReference>
<dbReference type="InterPro" id="IPR036794">
    <property type="entry name" value="ATP_F1_dsu/esu_C_sf"/>
</dbReference>
<dbReference type="InterPro" id="IPR001469">
    <property type="entry name" value="ATP_synth_F1_dsu/esu"/>
</dbReference>
<dbReference type="InterPro" id="IPR020546">
    <property type="entry name" value="ATP_synth_F1_dsu/esu_N"/>
</dbReference>
<dbReference type="InterPro" id="IPR020547">
    <property type="entry name" value="ATP_synth_F1_esu_C"/>
</dbReference>
<dbReference type="InterPro" id="IPR036771">
    <property type="entry name" value="ATPsynth_dsu/esu_N"/>
</dbReference>
<dbReference type="NCBIfam" id="TIGR01216">
    <property type="entry name" value="ATP_synt_epsi"/>
    <property type="match status" value="1"/>
</dbReference>
<dbReference type="NCBIfam" id="NF001847">
    <property type="entry name" value="PRK00571.1-4"/>
    <property type="match status" value="1"/>
</dbReference>
<dbReference type="PANTHER" id="PTHR13822">
    <property type="entry name" value="ATP SYNTHASE DELTA/EPSILON CHAIN"/>
    <property type="match status" value="1"/>
</dbReference>
<dbReference type="PANTHER" id="PTHR13822:SF10">
    <property type="entry name" value="ATP SYNTHASE EPSILON CHAIN, CHLOROPLASTIC"/>
    <property type="match status" value="1"/>
</dbReference>
<dbReference type="Pfam" id="PF00401">
    <property type="entry name" value="ATP-synt_DE"/>
    <property type="match status" value="1"/>
</dbReference>
<dbReference type="Pfam" id="PF02823">
    <property type="entry name" value="ATP-synt_DE_N"/>
    <property type="match status" value="1"/>
</dbReference>
<dbReference type="SUPFAM" id="SSF46604">
    <property type="entry name" value="Epsilon subunit of F1F0-ATP synthase C-terminal domain"/>
    <property type="match status" value="1"/>
</dbReference>
<dbReference type="SUPFAM" id="SSF51344">
    <property type="entry name" value="Epsilon subunit of F1F0-ATP synthase N-terminal domain"/>
    <property type="match status" value="1"/>
</dbReference>
<protein>
    <recommendedName>
        <fullName evidence="1">ATP synthase epsilon chain</fullName>
    </recommendedName>
    <alternativeName>
        <fullName evidence="1">ATP synthase F1 sector epsilon subunit</fullName>
    </alternativeName>
    <alternativeName>
        <fullName evidence="1">F-ATPase epsilon subunit</fullName>
    </alternativeName>
</protein>
<name>ATPE_BURMA</name>
<organism>
    <name type="scientific">Burkholderia mallei (strain ATCC 23344)</name>
    <dbReference type="NCBI Taxonomy" id="243160"/>
    <lineage>
        <taxon>Bacteria</taxon>
        <taxon>Pseudomonadati</taxon>
        <taxon>Pseudomonadota</taxon>
        <taxon>Betaproteobacteria</taxon>
        <taxon>Burkholderiales</taxon>
        <taxon>Burkholderiaceae</taxon>
        <taxon>Burkholderia</taxon>
        <taxon>pseudomallei group</taxon>
    </lineage>
</organism>
<keyword id="KW-0066">ATP synthesis</keyword>
<keyword id="KW-0997">Cell inner membrane</keyword>
<keyword id="KW-1003">Cell membrane</keyword>
<keyword id="KW-0139">CF(1)</keyword>
<keyword id="KW-0375">Hydrogen ion transport</keyword>
<keyword id="KW-0406">Ion transport</keyword>
<keyword id="KW-0472">Membrane</keyword>
<keyword id="KW-1185">Reference proteome</keyword>
<keyword id="KW-0813">Transport</keyword>
<reference key="1">
    <citation type="journal article" date="2004" name="Proc. Natl. Acad. Sci. U.S.A.">
        <title>Structural flexibility in the Burkholderia mallei genome.</title>
        <authorList>
            <person name="Nierman W.C."/>
            <person name="DeShazer D."/>
            <person name="Kim H.S."/>
            <person name="Tettelin H."/>
            <person name="Nelson K.E."/>
            <person name="Feldblyum T.V."/>
            <person name="Ulrich R.L."/>
            <person name="Ronning C.M."/>
            <person name="Brinkac L.M."/>
            <person name="Daugherty S.C."/>
            <person name="Davidsen T.D."/>
            <person name="DeBoy R.T."/>
            <person name="Dimitrov G."/>
            <person name="Dodson R.J."/>
            <person name="Durkin A.S."/>
            <person name="Gwinn M.L."/>
            <person name="Haft D.H."/>
            <person name="Khouri H.M."/>
            <person name="Kolonay J.F."/>
            <person name="Madupu R."/>
            <person name="Mohammoud Y."/>
            <person name="Nelson W.C."/>
            <person name="Radune D."/>
            <person name="Romero C.M."/>
            <person name="Sarria S."/>
            <person name="Selengut J."/>
            <person name="Shamblin C."/>
            <person name="Sullivan S.A."/>
            <person name="White O."/>
            <person name="Yu Y."/>
            <person name="Zafar N."/>
            <person name="Zhou L."/>
            <person name="Fraser C.M."/>
        </authorList>
    </citation>
    <scope>NUCLEOTIDE SEQUENCE [LARGE SCALE GENOMIC DNA]</scope>
    <source>
        <strain>ATCC 23344</strain>
    </source>
</reference>
<gene>
    <name evidence="1" type="primary">atpC</name>
    <name type="ordered locus">BMA2958</name>
</gene>
<proteinExistence type="inferred from homology"/>
<comment type="function">
    <text evidence="1">Produces ATP from ADP in the presence of a proton gradient across the membrane.</text>
</comment>
<comment type="subunit">
    <text>F-type ATPases have 2 components, CF(1) - the catalytic core - and CF(0) - the membrane proton channel. CF(1) has five subunits: alpha(3), beta(3), gamma(1), delta(1), epsilon(1). CF(0) has three main subunits: a, b and c.</text>
</comment>
<comment type="subcellular location">
    <subcellularLocation>
        <location evidence="1">Cell inner membrane</location>
        <topology evidence="1">Peripheral membrane protein</topology>
    </subcellularLocation>
</comment>
<comment type="similarity">
    <text evidence="1">Belongs to the ATPase epsilon chain family.</text>
</comment>
<sequence>MATIKVDVVSAEEQIFSGQAKFVALPGEAGELGILPGHTPLITRIRPGAVRIESESGDEEFVFVAGGILEVQPGAVTVLADTAIRGKDLDAAKAEEARKRAEETLQNAKSDIDLAKAQSELATAMAQLEAIQRLAKIRGKH</sequence>